<dbReference type="EC" id="2.7.-.-" evidence="1"/>
<dbReference type="EMBL" id="BX936398">
    <property type="protein sequence ID" value="CAH19497.1"/>
    <property type="molecule type" value="Genomic_DNA"/>
</dbReference>
<dbReference type="RefSeq" id="WP_002211535.1">
    <property type="nucleotide sequence ID" value="NZ_CP009712.1"/>
</dbReference>
<dbReference type="SMR" id="Q66FS8"/>
<dbReference type="GeneID" id="57974929"/>
<dbReference type="KEGG" id="ypo:BZ17_2326"/>
<dbReference type="KEGG" id="yps:YPTB0257"/>
<dbReference type="PATRIC" id="fig|273123.14.peg.2449"/>
<dbReference type="UniPathway" id="UPA00232"/>
<dbReference type="Proteomes" id="UP000001011">
    <property type="component" value="Chromosome"/>
</dbReference>
<dbReference type="GO" id="GO:0005886">
    <property type="term" value="C:plasma membrane"/>
    <property type="evidence" value="ECO:0007669"/>
    <property type="project" value="UniProtKB-SubCell"/>
</dbReference>
<dbReference type="GO" id="GO:0005524">
    <property type="term" value="F:ATP binding"/>
    <property type="evidence" value="ECO:0007669"/>
    <property type="project" value="UniProtKB-KW"/>
</dbReference>
<dbReference type="GO" id="GO:0004672">
    <property type="term" value="F:protein kinase activity"/>
    <property type="evidence" value="ECO:0007669"/>
    <property type="project" value="UniProtKB-UniRule"/>
</dbReference>
<dbReference type="GO" id="GO:0010795">
    <property type="term" value="P:regulation of ubiquinone biosynthetic process"/>
    <property type="evidence" value="ECO:0007669"/>
    <property type="project" value="UniProtKB-UniRule"/>
</dbReference>
<dbReference type="GO" id="GO:0006744">
    <property type="term" value="P:ubiquinone biosynthetic process"/>
    <property type="evidence" value="ECO:0007669"/>
    <property type="project" value="UniProtKB-UniPathway"/>
</dbReference>
<dbReference type="CDD" id="cd13972">
    <property type="entry name" value="UbiB"/>
    <property type="match status" value="1"/>
</dbReference>
<dbReference type="HAMAP" id="MF_00414">
    <property type="entry name" value="UbiB"/>
    <property type="match status" value="1"/>
</dbReference>
<dbReference type="InterPro" id="IPR004147">
    <property type="entry name" value="ABC1_dom"/>
</dbReference>
<dbReference type="InterPro" id="IPR011009">
    <property type="entry name" value="Kinase-like_dom_sf"/>
</dbReference>
<dbReference type="InterPro" id="IPR010232">
    <property type="entry name" value="UbiB"/>
</dbReference>
<dbReference type="InterPro" id="IPR045308">
    <property type="entry name" value="UbiB_bact"/>
</dbReference>
<dbReference type="InterPro" id="IPR050154">
    <property type="entry name" value="UbiB_kinase"/>
</dbReference>
<dbReference type="NCBIfam" id="NF003404">
    <property type="entry name" value="PRK04750.1"/>
    <property type="match status" value="1"/>
</dbReference>
<dbReference type="NCBIfam" id="TIGR01982">
    <property type="entry name" value="UbiB"/>
    <property type="match status" value="1"/>
</dbReference>
<dbReference type="PANTHER" id="PTHR10566">
    <property type="entry name" value="CHAPERONE-ACTIVITY OF BC1 COMPLEX CABC1 -RELATED"/>
    <property type="match status" value="1"/>
</dbReference>
<dbReference type="PANTHER" id="PTHR10566:SF113">
    <property type="entry name" value="PROTEIN ACTIVITY OF BC1 COMPLEX KINASE 7, CHLOROPLASTIC"/>
    <property type="match status" value="1"/>
</dbReference>
<dbReference type="Pfam" id="PF03109">
    <property type="entry name" value="ABC1"/>
    <property type="match status" value="1"/>
</dbReference>
<dbReference type="SUPFAM" id="SSF56112">
    <property type="entry name" value="Protein kinase-like (PK-like)"/>
    <property type="match status" value="1"/>
</dbReference>
<comment type="function">
    <text evidence="1">Is probably a protein kinase regulator of UbiI activity which is involved in aerobic coenzyme Q (ubiquinone) biosynthesis.</text>
</comment>
<comment type="pathway">
    <text>Cofactor biosynthesis; ubiquinone biosynthesis [regulation].</text>
</comment>
<comment type="subcellular location">
    <subcellularLocation>
        <location evidence="1">Cell inner membrane</location>
        <topology evidence="1">Single-pass membrane protein</topology>
    </subcellularLocation>
</comment>
<comment type="similarity">
    <text evidence="1">Belongs to the ABC1 family. UbiB subfamily.</text>
</comment>
<protein>
    <recommendedName>
        <fullName evidence="1">Probable protein kinase UbiB</fullName>
        <ecNumber evidence="1">2.7.-.-</ecNumber>
    </recommendedName>
    <alternativeName>
        <fullName evidence="1">Ubiquinone biosynthesis protein UbiB</fullName>
    </alternativeName>
</protein>
<accession>Q66FS8</accession>
<feature type="chain" id="PRO_0000200729" description="Probable protein kinase UbiB">
    <location>
        <begin position="1"/>
        <end position="543"/>
    </location>
</feature>
<feature type="transmembrane region" description="Helical" evidence="1">
    <location>
        <begin position="517"/>
        <end position="539"/>
    </location>
</feature>
<feature type="domain" description="Protein kinase" evidence="1">
    <location>
        <begin position="123"/>
        <end position="501"/>
    </location>
</feature>
<feature type="active site" description="Proton acceptor" evidence="1">
    <location>
        <position position="287"/>
    </location>
</feature>
<feature type="binding site" evidence="1">
    <location>
        <begin position="129"/>
        <end position="137"/>
    </location>
    <ligand>
        <name>ATP</name>
        <dbReference type="ChEBI" id="CHEBI:30616"/>
    </ligand>
</feature>
<feature type="binding site" evidence="1">
    <location>
        <position position="152"/>
    </location>
    <ligand>
        <name>ATP</name>
        <dbReference type="ChEBI" id="CHEBI:30616"/>
    </ligand>
</feature>
<name>UBIB_YERPS</name>
<keyword id="KW-0067">ATP-binding</keyword>
<keyword id="KW-0997">Cell inner membrane</keyword>
<keyword id="KW-1003">Cell membrane</keyword>
<keyword id="KW-0418">Kinase</keyword>
<keyword id="KW-0472">Membrane</keyword>
<keyword id="KW-0547">Nucleotide-binding</keyword>
<keyword id="KW-0808">Transferase</keyword>
<keyword id="KW-0812">Transmembrane</keyword>
<keyword id="KW-1133">Transmembrane helix</keyword>
<keyword id="KW-0831">Ubiquinone biosynthesis</keyword>
<sequence length="543" mass="62427">MTPGELRRLYLIIRVFLSYGLDELIPNIRLTLPLRVGRHLFFWLSNRHKDKSLGERLRLALQELGPVWIKFGQMMSTRRDLFPPNIADQLALLQDRVASFDGALARKHIEIAMGGALETWFDDFDSQALASASIAQVHTARLKENGKEVVLKVIRPDILPIIKADVRLMYRLAGWVPKLLPDGRRLRPREVVREYEKTLLDELNLLREAANAIQLRRNFEDSPMLYIPEVYSDYCRESVLVMERIYGIPVSDIAALEDQGTNMKLLAERGVQVFFTQVFRDSFFHADMHPGNIFVSYEHPHDPLYIGIDCGIVGSLNKADKRYLAENFIAFFNRDYRRVAELHVDSGWVPRDTNVEDFEFAIRTVCEPIFEKPLAEISFGHVLLNLFNTARRFNMEVQPQLVLLQKTLLYVEGLGRQLYPQLDLWTTAKPFLESWLRDQVGLPAVIRALKEKAPFWAEKFPELPELVYDSLQQHKLLQQSVEKLTIQIQGQQQRQGQSRYLFGVGATLLVSGTILFLADATEVSTGFIVAGALAWFIGWRRTC</sequence>
<evidence type="ECO:0000255" key="1">
    <source>
        <dbReference type="HAMAP-Rule" id="MF_00414"/>
    </source>
</evidence>
<reference key="1">
    <citation type="journal article" date="2004" name="Proc. Natl. Acad. Sci. U.S.A.">
        <title>Insights into the evolution of Yersinia pestis through whole-genome comparison with Yersinia pseudotuberculosis.</title>
        <authorList>
            <person name="Chain P.S.G."/>
            <person name="Carniel E."/>
            <person name="Larimer F.W."/>
            <person name="Lamerdin J."/>
            <person name="Stoutland P.O."/>
            <person name="Regala W.M."/>
            <person name="Georgescu A.M."/>
            <person name="Vergez L.M."/>
            <person name="Land M.L."/>
            <person name="Motin V.L."/>
            <person name="Brubaker R.R."/>
            <person name="Fowler J."/>
            <person name="Hinnebusch J."/>
            <person name="Marceau M."/>
            <person name="Medigue C."/>
            <person name="Simonet M."/>
            <person name="Chenal-Francisque V."/>
            <person name="Souza B."/>
            <person name="Dacheux D."/>
            <person name="Elliott J.M."/>
            <person name="Derbise A."/>
            <person name="Hauser L.J."/>
            <person name="Garcia E."/>
        </authorList>
    </citation>
    <scope>NUCLEOTIDE SEQUENCE [LARGE SCALE GENOMIC DNA]</scope>
    <source>
        <strain>IP32953</strain>
    </source>
</reference>
<organism>
    <name type="scientific">Yersinia pseudotuberculosis serotype I (strain IP32953)</name>
    <dbReference type="NCBI Taxonomy" id="273123"/>
    <lineage>
        <taxon>Bacteria</taxon>
        <taxon>Pseudomonadati</taxon>
        <taxon>Pseudomonadota</taxon>
        <taxon>Gammaproteobacteria</taxon>
        <taxon>Enterobacterales</taxon>
        <taxon>Yersiniaceae</taxon>
        <taxon>Yersinia</taxon>
    </lineage>
</organism>
<proteinExistence type="inferred from homology"/>
<gene>
    <name evidence="1" type="primary">ubiB</name>
    <name type="synonym">aarF</name>
    <name type="ordered locus">YPTB0257</name>
</gene>